<proteinExistence type="inferred from homology"/>
<evidence type="ECO:0000255" key="1">
    <source>
        <dbReference type="HAMAP-Rule" id="MF_01220"/>
    </source>
</evidence>
<comment type="function">
    <text evidence="1">Catalyzes the reversible phosphorylation of UMP to UDP.</text>
</comment>
<comment type="catalytic activity">
    <reaction evidence="1">
        <text>UMP + ATP = UDP + ADP</text>
        <dbReference type="Rhea" id="RHEA:24400"/>
        <dbReference type="ChEBI" id="CHEBI:30616"/>
        <dbReference type="ChEBI" id="CHEBI:57865"/>
        <dbReference type="ChEBI" id="CHEBI:58223"/>
        <dbReference type="ChEBI" id="CHEBI:456216"/>
        <dbReference type="EC" id="2.7.4.22"/>
    </reaction>
</comment>
<comment type="activity regulation">
    <text evidence="1">Inhibited by UTP.</text>
</comment>
<comment type="pathway">
    <text evidence="1">Pyrimidine metabolism; CTP biosynthesis via de novo pathway; UDP from UMP (UMPK route): step 1/1.</text>
</comment>
<comment type="subunit">
    <text evidence="1">Homohexamer.</text>
</comment>
<comment type="subcellular location">
    <subcellularLocation>
        <location evidence="1">Cytoplasm</location>
    </subcellularLocation>
</comment>
<comment type="similarity">
    <text evidence="1">Belongs to the UMP kinase family.</text>
</comment>
<feature type="chain" id="PRO_0000323892" description="Uridylate kinase">
    <location>
        <begin position="1"/>
        <end position="237"/>
    </location>
</feature>
<feature type="binding site" evidence="1">
    <location>
        <begin position="11"/>
        <end position="14"/>
    </location>
    <ligand>
        <name>ATP</name>
        <dbReference type="ChEBI" id="CHEBI:30616"/>
    </ligand>
</feature>
<feature type="binding site" evidence="1">
    <location>
        <position position="52"/>
    </location>
    <ligand>
        <name>UMP</name>
        <dbReference type="ChEBI" id="CHEBI:57865"/>
    </ligand>
</feature>
<feature type="binding site" evidence="1">
    <location>
        <position position="53"/>
    </location>
    <ligand>
        <name>ATP</name>
        <dbReference type="ChEBI" id="CHEBI:30616"/>
    </ligand>
</feature>
<feature type="binding site" evidence="1">
    <location>
        <position position="57"/>
    </location>
    <ligand>
        <name>ATP</name>
        <dbReference type="ChEBI" id="CHEBI:30616"/>
    </ligand>
</feature>
<feature type="binding site" evidence="1">
    <location>
        <position position="72"/>
    </location>
    <ligand>
        <name>UMP</name>
        <dbReference type="ChEBI" id="CHEBI:57865"/>
    </ligand>
</feature>
<feature type="binding site" evidence="1">
    <location>
        <begin position="134"/>
        <end position="141"/>
    </location>
    <ligand>
        <name>UMP</name>
        <dbReference type="ChEBI" id="CHEBI:57865"/>
    </ligand>
</feature>
<feature type="binding site" evidence="1">
    <location>
        <position position="162"/>
    </location>
    <ligand>
        <name>ATP</name>
        <dbReference type="ChEBI" id="CHEBI:30616"/>
    </ligand>
</feature>
<feature type="binding site" evidence="1">
    <location>
        <position position="168"/>
    </location>
    <ligand>
        <name>ATP</name>
        <dbReference type="ChEBI" id="CHEBI:30616"/>
    </ligand>
</feature>
<feature type="binding site" evidence="1">
    <location>
        <position position="171"/>
    </location>
    <ligand>
        <name>ATP</name>
        <dbReference type="ChEBI" id="CHEBI:30616"/>
    </ligand>
</feature>
<sequence>MNYKYKTVLLKLSGEALKGDAEVYDKKCLEDIASQIIHLVKNGLKLGIVIGGGNIWRGKLGENIGMDAINADYMGMLATVMNGLALESTITKMGYDKIKVYSSLPIKTVTDDYNFKKARIKMNEGFISIFVGGTGYSYFTTDTNATIRAIEIGAEAILMAKNGVKGVYDKDPKQHKDAKFIKKISHQEIVDKQLRIMDLTAATLAKDANLKIEVFDMSGDNNIIKVLENKLESTIIE</sequence>
<accession>Q2SSA5</accession>
<reference key="1">
    <citation type="submission" date="2005-09" db="EMBL/GenBank/DDBJ databases">
        <authorList>
            <person name="Glass J.I."/>
            <person name="Lartigue C."/>
            <person name="Pfannkoch C."/>
            <person name="Baden-Tillson H."/>
            <person name="Smith H.O."/>
            <person name="Venter J.C."/>
            <person name="Roske K."/>
            <person name="Wise K.S."/>
            <person name="Calcutt M.J."/>
            <person name="Nelson W.C."/>
            <person name="Nierman W.C."/>
        </authorList>
    </citation>
    <scope>NUCLEOTIDE SEQUENCE [LARGE SCALE GENOMIC DNA]</scope>
    <source>
        <strain>California kid / ATCC 27343 / NCTC 10154</strain>
    </source>
</reference>
<protein>
    <recommendedName>
        <fullName evidence="1">Uridylate kinase</fullName>
        <shortName evidence="1">UK</shortName>
        <ecNumber evidence="1">2.7.4.22</ecNumber>
    </recommendedName>
    <alternativeName>
        <fullName evidence="1">Uridine monophosphate kinase</fullName>
        <shortName evidence="1">UMP kinase</shortName>
        <shortName evidence="1">UMPK</shortName>
    </alternativeName>
</protein>
<dbReference type="EC" id="2.7.4.22" evidence="1"/>
<dbReference type="EMBL" id="CP000123">
    <property type="protein sequence ID" value="ABC01206.1"/>
    <property type="molecule type" value="Genomic_DNA"/>
</dbReference>
<dbReference type="RefSeq" id="WP_011387259.1">
    <property type="nucleotide sequence ID" value="NC_007633.1"/>
</dbReference>
<dbReference type="SMR" id="Q2SSA5"/>
<dbReference type="GeneID" id="23778670"/>
<dbReference type="KEGG" id="mcp:MCAP_0374"/>
<dbReference type="HOGENOM" id="CLU_033861_0_1_14"/>
<dbReference type="PhylomeDB" id="Q2SSA5"/>
<dbReference type="UniPathway" id="UPA00159">
    <property type="reaction ID" value="UER00275"/>
</dbReference>
<dbReference type="Proteomes" id="UP000001928">
    <property type="component" value="Chromosome"/>
</dbReference>
<dbReference type="GO" id="GO:0005737">
    <property type="term" value="C:cytoplasm"/>
    <property type="evidence" value="ECO:0007669"/>
    <property type="project" value="UniProtKB-SubCell"/>
</dbReference>
<dbReference type="GO" id="GO:0005524">
    <property type="term" value="F:ATP binding"/>
    <property type="evidence" value="ECO:0007669"/>
    <property type="project" value="UniProtKB-KW"/>
</dbReference>
<dbReference type="GO" id="GO:0033862">
    <property type="term" value="F:UMP kinase activity"/>
    <property type="evidence" value="ECO:0007669"/>
    <property type="project" value="UniProtKB-EC"/>
</dbReference>
<dbReference type="GO" id="GO:0044210">
    <property type="term" value="P:'de novo' CTP biosynthetic process"/>
    <property type="evidence" value="ECO:0007669"/>
    <property type="project" value="UniProtKB-UniRule"/>
</dbReference>
<dbReference type="GO" id="GO:0006225">
    <property type="term" value="P:UDP biosynthetic process"/>
    <property type="evidence" value="ECO:0007669"/>
    <property type="project" value="TreeGrafter"/>
</dbReference>
<dbReference type="CDD" id="cd04254">
    <property type="entry name" value="AAK_UMPK-PyrH-Ec"/>
    <property type="match status" value="1"/>
</dbReference>
<dbReference type="FunFam" id="3.40.1160.10:FF:000001">
    <property type="entry name" value="Uridylate kinase"/>
    <property type="match status" value="1"/>
</dbReference>
<dbReference type="Gene3D" id="3.40.1160.10">
    <property type="entry name" value="Acetylglutamate kinase-like"/>
    <property type="match status" value="1"/>
</dbReference>
<dbReference type="HAMAP" id="MF_01220_B">
    <property type="entry name" value="PyrH_B"/>
    <property type="match status" value="1"/>
</dbReference>
<dbReference type="InterPro" id="IPR036393">
    <property type="entry name" value="AceGlu_kinase-like_sf"/>
</dbReference>
<dbReference type="InterPro" id="IPR001048">
    <property type="entry name" value="Asp/Glu/Uridylate_kinase"/>
</dbReference>
<dbReference type="InterPro" id="IPR011817">
    <property type="entry name" value="Uridylate_kinase"/>
</dbReference>
<dbReference type="InterPro" id="IPR015963">
    <property type="entry name" value="Uridylate_kinase_bac"/>
</dbReference>
<dbReference type="NCBIfam" id="TIGR02075">
    <property type="entry name" value="pyrH_bact"/>
    <property type="match status" value="1"/>
</dbReference>
<dbReference type="PANTHER" id="PTHR42833">
    <property type="entry name" value="URIDYLATE KINASE"/>
    <property type="match status" value="1"/>
</dbReference>
<dbReference type="PANTHER" id="PTHR42833:SF4">
    <property type="entry name" value="URIDYLATE KINASE PUMPKIN, CHLOROPLASTIC"/>
    <property type="match status" value="1"/>
</dbReference>
<dbReference type="Pfam" id="PF00696">
    <property type="entry name" value="AA_kinase"/>
    <property type="match status" value="1"/>
</dbReference>
<dbReference type="PIRSF" id="PIRSF005650">
    <property type="entry name" value="Uridylate_kin"/>
    <property type="match status" value="1"/>
</dbReference>
<dbReference type="SUPFAM" id="SSF53633">
    <property type="entry name" value="Carbamate kinase-like"/>
    <property type="match status" value="1"/>
</dbReference>
<organism>
    <name type="scientific">Mycoplasma capricolum subsp. capricolum (strain California kid / ATCC 27343 / NCTC 10154)</name>
    <dbReference type="NCBI Taxonomy" id="340047"/>
    <lineage>
        <taxon>Bacteria</taxon>
        <taxon>Bacillati</taxon>
        <taxon>Mycoplasmatota</taxon>
        <taxon>Mollicutes</taxon>
        <taxon>Mycoplasmataceae</taxon>
        <taxon>Mycoplasma</taxon>
    </lineage>
</organism>
<name>PYRH_MYCCT</name>
<keyword id="KW-0067">ATP-binding</keyword>
<keyword id="KW-0963">Cytoplasm</keyword>
<keyword id="KW-0418">Kinase</keyword>
<keyword id="KW-0547">Nucleotide-binding</keyword>
<keyword id="KW-0665">Pyrimidine biosynthesis</keyword>
<keyword id="KW-0808">Transferase</keyword>
<gene>
    <name evidence="1" type="primary">pyrH</name>
    <name type="ordered locus">MCAP_0374</name>
</gene>